<name>DNAJ_RHIME</name>
<sequence>MKRDLYETLGVQKNADEKELKSAFRKLAMKYHPDRNPGDQESEKSFKEINEAYETLKDPQKRAAYDRYGHAAFEQGGMGAGFGNGFAGGGAHGFSDIFEDIFGEMMGGRQRRSSGGRERGADLRYNMEISLEEAYSGKTAQIRVPTSITCDVCTGTGAKPGTSPKTCGTCQGTGRVRAAQGFFSIERTCPTCGGRGQTIADPCTKCHGQGRVVEERTLSVNIPAGIEDGTRIRLSGEGEAGLRGGPAGDLYIFLSVKPHEFYQRDGADLYCAVPISMTTAALGGKFDVTTLDGTKSRVTVPEGTQAGKQFRLKGKGMPVLRSSQTGDLYIQIQIETPQKLTKRQRELLQEFEQISSKENNPESTGFFSRMKDFFDTLSE</sequence>
<organism>
    <name type="scientific">Rhizobium meliloti (strain 1021)</name>
    <name type="common">Ensifer meliloti</name>
    <name type="synonym">Sinorhizobium meliloti</name>
    <dbReference type="NCBI Taxonomy" id="266834"/>
    <lineage>
        <taxon>Bacteria</taxon>
        <taxon>Pseudomonadati</taxon>
        <taxon>Pseudomonadota</taxon>
        <taxon>Alphaproteobacteria</taxon>
        <taxon>Hyphomicrobiales</taxon>
        <taxon>Rhizobiaceae</taxon>
        <taxon>Sinorhizobium/Ensifer group</taxon>
        <taxon>Sinorhizobium</taxon>
    </lineage>
</organism>
<evidence type="ECO:0000255" key="1">
    <source>
        <dbReference type="HAMAP-Rule" id="MF_01152"/>
    </source>
</evidence>
<dbReference type="EMBL" id="AL591688">
    <property type="protein sequence ID" value="CAC41570.1"/>
    <property type="molecule type" value="Genomic_DNA"/>
</dbReference>
<dbReference type="RefSeq" id="NP_384289.1">
    <property type="nucleotide sequence ID" value="NC_003047.1"/>
</dbReference>
<dbReference type="RefSeq" id="WP_003531907.1">
    <property type="nucleotide sequence ID" value="NC_003047.1"/>
</dbReference>
<dbReference type="SMR" id="Q92T07"/>
<dbReference type="EnsemblBacteria" id="CAC41570">
    <property type="protein sequence ID" value="CAC41570"/>
    <property type="gene ID" value="SMc02858"/>
</dbReference>
<dbReference type="GeneID" id="89574504"/>
<dbReference type="KEGG" id="sme:SMc02858"/>
<dbReference type="PATRIC" id="fig|266834.11.peg.1545"/>
<dbReference type="eggNOG" id="COG0484">
    <property type="taxonomic scope" value="Bacteria"/>
</dbReference>
<dbReference type="HOGENOM" id="CLU_017633_0_7_5"/>
<dbReference type="OrthoDB" id="9779889at2"/>
<dbReference type="Proteomes" id="UP000001976">
    <property type="component" value="Chromosome"/>
</dbReference>
<dbReference type="GO" id="GO:0005737">
    <property type="term" value="C:cytoplasm"/>
    <property type="evidence" value="ECO:0007669"/>
    <property type="project" value="UniProtKB-SubCell"/>
</dbReference>
<dbReference type="GO" id="GO:0005524">
    <property type="term" value="F:ATP binding"/>
    <property type="evidence" value="ECO:0007669"/>
    <property type="project" value="InterPro"/>
</dbReference>
<dbReference type="GO" id="GO:0031072">
    <property type="term" value="F:heat shock protein binding"/>
    <property type="evidence" value="ECO:0007669"/>
    <property type="project" value="InterPro"/>
</dbReference>
<dbReference type="GO" id="GO:0051082">
    <property type="term" value="F:unfolded protein binding"/>
    <property type="evidence" value="ECO:0007669"/>
    <property type="project" value="UniProtKB-UniRule"/>
</dbReference>
<dbReference type="GO" id="GO:0008270">
    <property type="term" value="F:zinc ion binding"/>
    <property type="evidence" value="ECO:0007669"/>
    <property type="project" value="UniProtKB-UniRule"/>
</dbReference>
<dbReference type="GO" id="GO:0051085">
    <property type="term" value="P:chaperone cofactor-dependent protein refolding"/>
    <property type="evidence" value="ECO:0007669"/>
    <property type="project" value="TreeGrafter"/>
</dbReference>
<dbReference type="GO" id="GO:0006260">
    <property type="term" value="P:DNA replication"/>
    <property type="evidence" value="ECO:0007669"/>
    <property type="project" value="UniProtKB-KW"/>
</dbReference>
<dbReference type="GO" id="GO:0042026">
    <property type="term" value="P:protein refolding"/>
    <property type="evidence" value="ECO:0007669"/>
    <property type="project" value="TreeGrafter"/>
</dbReference>
<dbReference type="GO" id="GO:0009408">
    <property type="term" value="P:response to heat"/>
    <property type="evidence" value="ECO:0007669"/>
    <property type="project" value="InterPro"/>
</dbReference>
<dbReference type="CDD" id="cd06257">
    <property type="entry name" value="DnaJ"/>
    <property type="match status" value="1"/>
</dbReference>
<dbReference type="CDD" id="cd10747">
    <property type="entry name" value="DnaJ_C"/>
    <property type="match status" value="1"/>
</dbReference>
<dbReference type="CDD" id="cd10719">
    <property type="entry name" value="DnaJ_zf"/>
    <property type="match status" value="1"/>
</dbReference>
<dbReference type="FunFam" id="1.10.287.110:FF:000034">
    <property type="entry name" value="Chaperone protein DnaJ"/>
    <property type="match status" value="1"/>
</dbReference>
<dbReference type="FunFam" id="2.10.230.10:FF:000002">
    <property type="entry name" value="Molecular chaperone DnaJ"/>
    <property type="match status" value="1"/>
</dbReference>
<dbReference type="FunFam" id="2.60.260.20:FF:000004">
    <property type="entry name" value="Molecular chaperone DnaJ"/>
    <property type="match status" value="1"/>
</dbReference>
<dbReference type="Gene3D" id="1.10.287.110">
    <property type="entry name" value="DnaJ domain"/>
    <property type="match status" value="1"/>
</dbReference>
<dbReference type="Gene3D" id="2.10.230.10">
    <property type="entry name" value="Heat shock protein DnaJ, cysteine-rich domain"/>
    <property type="match status" value="1"/>
</dbReference>
<dbReference type="Gene3D" id="2.60.260.20">
    <property type="entry name" value="Urease metallochaperone UreE, N-terminal domain"/>
    <property type="match status" value="2"/>
</dbReference>
<dbReference type="HAMAP" id="MF_01152">
    <property type="entry name" value="DnaJ"/>
    <property type="match status" value="1"/>
</dbReference>
<dbReference type="InterPro" id="IPR012724">
    <property type="entry name" value="DnaJ"/>
</dbReference>
<dbReference type="InterPro" id="IPR002939">
    <property type="entry name" value="DnaJ_C"/>
</dbReference>
<dbReference type="InterPro" id="IPR001623">
    <property type="entry name" value="DnaJ_domain"/>
</dbReference>
<dbReference type="InterPro" id="IPR018253">
    <property type="entry name" value="DnaJ_domain_CS"/>
</dbReference>
<dbReference type="InterPro" id="IPR008971">
    <property type="entry name" value="HSP40/DnaJ_pept-bd"/>
</dbReference>
<dbReference type="InterPro" id="IPR001305">
    <property type="entry name" value="HSP_DnaJ_Cys-rich_dom"/>
</dbReference>
<dbReference type="InterPro" id="IPR036410">
    <property type="entry name" value="HSP_DnaJ_Cys-rich_dom_sf"/>
</dbReference>
<dbReference type="InterPro" id="IPR036869">
    <property type="entry name" value="J_dom_sf"/>
</dbReference>
<dbReference type="NCBIfam" id="TIGR02349">
    <property type="entry name" value="DnaJ_bact"/>
    <property type="match status" value="1"/>
</dbReference>
<dbReference type="NCBIfam" id="NF008035">
    <property type="entry name" value="PRK10767.1"/>
    <property type="match status" value="1"/>
</dbReference>
<dbReference type="PANTHER" id="PTHR43096:SF48">
    <property type="entry name" value="CHAPERONE PROTEIN DNAJ"/>
    <property type="match status" value="1"/>
</dbReference>
<dbReference type="PANTHER" id="PTHR43096">
    <property type="entry name" value="DNAJ HOMOLOG 1, MITOCHONDRIAL-RELATED"/>
    <property type="match status" value="1"/>
</dbReference>
<dbReference type="Pfam" id="PF00226">
    <property type="entry name" value="DnaJ"/>
    <property type="match status" value="1"/>
</dbReference>
<dbReference type="Pfam" id="PF01556">
    <property type="entry name" value="DnaJ_C"/>
    <property type="match status" value="1"/>
</dbReference>
<dbReference type="Pfam" id="PF00684">
    <property type="entry name" value="DnaJ_CXXCXGXG"/>
    <property type="match status" value="1"/>
</dbReference>
<dbReference type="PRINTS" id="PR00625">
    <property type="entry name" value="JDOMAIN"/>
</dbReference>
<dbReference type="SMART" id="SM00271">
    <property type="entry name" value="DnaJ"/>
    <property type="match status" value="1"/>
</dbReference>
<dbReference type="SUPFAM" id="SSF46565">
    <property type="entry name" value="Chaperone J-domain"/>
    <property type="match status" value="1"/>
</dbReference>
<dbReference type="SUPFAM" id="SSF57938">
    <property type="entry name" value="DnaJ/Hsp40 cysteine-rich domain"/>
    <property type="match status" value="1"/>
</dbReference>
<dbReference type="SUPFAM" id="SSF49493">
    <property type="entry name" value="HSP40/DnaJ peptide-binding domain"/>
    <property type="match status" value="2"/>
</dbReference>
<dbReference type="PROSITE" id="PS00636">
    <property type="entry name" value="DNAJ_1"/>
    <property type="match status" value="1"/>
</dbReference>
<dbReference type="PROSITE" id="PS50076">
    <property type="entry name" value="DNAJ_2"/>
    <property type="match status" value="1"/>
</dbReference>
<dbReference type="PROSITE" id="PS51188">
    <property type="entry name" value="ZF_CR"/>
    <property type="match status" value="1"/>
</dbReference>
<keyword id="KW-0143">Chaperone</keyword>
<keyword id="KW-0963">Cytoplasm</keyword>
<keyword id="KW-0235">DNA replication</keyword>
<keyword id="KW-0479">Metal-binding</keyword>
<keyword id="KW-1185">Reference proteome</keyword>
<keyword id="KW-0677">Repeat</keyword>
<keyword id="KW-0346">Stress response</keyword>
<keyword id="KW-0862">Zinc</keyword>
<keyword id="KW-0863">Zinc-finger</keyword>
<feature type="chain" id="PRO_0000070865" description="Chaperone protein DnaJ">
    <location>
        <begin position="1"/>
        <end position="379"/>
    </location>
</feature>
<feature type="domain" description="J" evidence="1">
    <location>
        <begin position="4"/>
        <end position="69"/>
    </location>
</feature>
<feature type="repeat" description="CXXCXGXG motif">
    <location>
        <begin position="150"/>
        <end position="157"/>
    </location>
</feature>
<feature type="repeat" description="CXXCXGXG motif">
    <location>
        <begin position="167"/>
        <end position="174"/>
    </location>
</feature>
<feature type="repeat" description="CXXCXGXG motif">
    <location>
        <begin position="189"/>
        <end position="196"/>
    </location>
</feature>
<feature type="repeat" description="CXXCXGXG motif">
    <location>
        <begin position="203"/>
        <end position="210"/>
    </location>
</feature>
<feature type="zinc finger region" description="CR-type" evidence="1">
    <location>
        <begin position="137"/>
        <end position="215"/>
    </location>
</feature>
<feature type="binding site" evidence="1">
    <location>
        <position position="150"/>
    </location>
    <ligand>
        <name>Zn(2+)</name>
        <dbReference type="ChEBI" id="CHEBI:29105"/>
        <label>1</label>
    </ligand>
</feature>
<feature type="binding site" evidence="1">
    <location>
        <position position="153"/>
    </location>
    <ligand>
        <name>Zn(2+)</name>
        <dbReference type="ChEBI" id="CHEBI:29105"/>
        <label>1</label>
    </ligand>
</feature>
<feature type="binding site" evidence="1">
    <location>
        <position position="167"/>
    </location>
    <ligand>
        <name>Zn(2+)</name>
        <dbReference type="ChEBI" id="CHEBI:29105"/>
        <label>2</label>
    </ligand>
</feature>
<feature type="binding site" evidence="1">
    <location>
        <position position="170"/>
    </location>
    <ligand>
        <name>Zn(2+)</name>
        <dbReference type="ChEBI" id="CHEBI:29105"/>
        <label>2</label>
    </ligand>
</feature>
<feature type="binding site" evidence="1">
    <location>
        <position position="189"/>
    </location>
    <ligand>
        <name>Zn(2+)</name>
        <dbReference type="ChEBI" id="CHEBI:29105"/>
        <label>2</label>
    </ligand>
</feature>
<feature type="binding site" evidence="1">
    <location>
        <position position="192"/>
    </location>
    <ligand>
        <name>Zn(2+)</name>
        <dbReference type="ChEBI" id="CHEBI:29105"/>
        <label>2</label>
    </ligand>
</feature>
<feature type="binding site" evidence="1">
    <location>
        <position position="203"/>
    </location>
    <ligand>
        <name>Zn(2+)</name>
        <dbReference type="ChEBI" id="CHEBI:29105"/>
        <label>1</label>
    </ligand>
</feature>
<feature type="binding site" evidence="1">
    <location>
        <position position="206"/>
    </location>
    <ligand>
        <name>Zn(2+)</name>
        <dbReference type="ChEBI" id="CHEBI:29105"/>
        <label>1</label>
    </ligand>
</feature>
<gene>
    <name evidence="1" type="primary">dnaJ</name>
    <name type="ordered locus">R00183</name>
    <name type="ORF">SMc02858</name>
</gene>
<reference key="1">
    <citation type="journal article" date="2001" name="Proc. Natl. Acad. Sci. U.S.A.">
        <title>Analysis of the chromosome sequence of the legume symbiont Sinorhizobium meliloti strain 1021.</title>
        <authorList>
            <person name="Capela D."/>
            <person name="Barloy-Hubler F."/>
            <person name="Gouzy J."/>
            <person name="Bothe G."/>
            <person name="Ampe F."/>
            <person name="Batut J."/>
            <person name="Boistard P."/>
            <person name="Becker A."/>
            <person name="Boutry M."/>
            <person name="Cadieu E."/>
            <person name="Dreano S."/>
            <person name="Gloux S."/>
            <person name="Godrie T."/>
            <person name="Goffeau A."/>
            <person name="Kahn D."/>
            <person name="Kiss E."/>
            <person name="Lelaure V."/>
            <person name="Masuy D."/>
            <person name="Pohl T."/>
            <person name="Portetelle D."/>
            <person name="Puehler A."/>
            <person name="Purnelle B."/>
            <person name="Ramsperger U."/>
            <person name="Renard C."/>
            <person name="Thebault P."/>
            <person name="Vandenbol M."/>
            <person name="Weidner S."/>
            <person name="Galibert F."/>
        </authorList>
    </citation>
    <scope>NUCLEOTIDE SEQUENCE [LARGE SCALE GENOMIC DNA]</scope>
    <source>
        <strain>1021</strain>
    </source>
</reference>
<reference key="2">
    <citation type="journal article" date="2001" name="Science">
        <title>The composite genome of the legume symbiont Sinorhizobium meliloti.</title>
        <authorList>
            <person name="Galibert F."/>
            <person name="Finan T.M."/>
            <person name="Long S.R."/>
            <person name="Puehler A."/>
            <person name="Abola P."/>
            <person name="Ampe F."/>
            <person name="Barloy-Hubler F."/>
            <person name="Barnett M.J."/>
            <person name="Becker A."/>
            <person name="Boistard P."/>
            <person name="Bothe G."/>
            <person name="Boutry M."/>
            <person name="Bowser L."/>
            <person name="Buhrmester J."/>
            <person name="Cadieu E."/>
            <person name="Capela D."/>
            <person name="Chain P."/>
            <person name="Cowie A."/>
            <person name="Davis R.W."/>
            <person name="Dreano S."/>
            <person name="Federspiel N.A."/>
            <person name="Fisher R.F."/>
            <person name="Gloux S."/>
            <person name="Godrie T."/>
            <person name="Goffeau A."/>
            <person name="Golding B."/>
            <person name="Gouzy J."/>
            <person name="Gurjal M."/>
            <person name="Hernandez-Lucas I."/>
            <person name="Hong A."/>
            <person name="Huizar L."/>
            <person name="Hyman R.W."/>
            <person name="Jones T."/>
            <person name="Kahn D."/>
            <person name="Kahn M.L."/>
            <person name="Kalman S."/>
            <person name="Keating D.H."/>
            <person name="Kiss E."/>
            <person name="Komp C."/>
            <person name="Lelaure V."/>
            <person name="Masuy D."/>
            <person name="Palm C."/>
            <person name="Peck M.C."/>
            <person name="Pohl T.M."/>
            <person name="Portetelle D."/>
            <person name="Purnelle B."/>
            <person name="Ramsperger U."/>
            <person name="Surzycki R."/>
            <person name="Thebault P."/>
            <person name="Vandenbol M."/>
            <person name="Vorhoelter F.J."/>
            <person name="Weidner S."/>
            <person name="Wells D.H."/>
            <person name="Wong K."/>
            <person name="Yeh K.-C."/>
            <person name="Batut J."/>
        </authorList>
    </citation>
    <scope>NUCLEOTIDE SEQUENCE [LARGE SCALE GENOMIC DNA]</scope>
    <source>
        <strain>1021</strain>
    </source>
</reference>
<protein>
    <recommendedName>
        <fullName evidence="1">Chaperone protein DnaJ</fullName>
    </recommendedName>
</protein>
<accession>Q92T07</accession>
<proteinExistence type="inferred from homology"/>
<comment type="function">
    <text evidence="1">Participates actively in the response to hyperosmotic and heat shock by preventing the aggregation of stress-denatured proteins and by disaggregating proteins, also in an autonomous, DnaK-independent fashion. Unfolded proteins bind initially to DnaJ; upon interaction with the DnaJ-bound protein, DnaK hydrolyzes its bound ATP, resulting in the formation of a stable complex. GrpE releases ADP from DnaK; ATP binding to DnaK triggers the release of the substrate protein, thus completing the reaction cycle. Several rounds of ATP-dependent interactions between DnaJ, DnaK and GrpE are required for fully efficient folding. Also involved, together with DnaK and GrpE, in the DNA replication of plasmids through activation of initiation proteins.</text>
</comment>
<comment type="cofactor">
    <cofactor evidence="1">
        <name>Zn(2+)</name>
        <dbReference type="ChEBI" id="CHEBI:29105"/>
    </cofactor>
    <text evidence="1">Binds 2 Zn(2+) ions per monomer.</text>
</comment>
<comment type="subunit">
    <text evidence="1">Homodimer.</text>
</comment>
<comment type="subcellular location">
    <subcellularLocation>
        <location evidence="1">Cytoplasm</location>
    </subcellularLocation>
</comment>
<comment type="domain">
    <text evidence="1">The J domain is necessary and sufficient to stimulate DnaK ATPase activity. Zinc center 1 plays an important role in the autonomous, DnaK-independent chaperone activity of DnaJ. Zinc center 2 is essential for interaction with DnaK and for DnaJ activity.</text>
</comment>
<comment type="similarity">
    <text evidence="1">Belongs to the DnaJ family.</text>
</comment>